<organism>
    <name type="scientific">Mus musculus</name>
    <name type="common">Mouse</name>
    <dbReference type="NCBI Taxonomy" id="10090"/>
    <lineage>
        <taxon>Eukaryota</taxon>
        <taxon>Metazoa</taxon>
        <taxon>Chordata</taxon>
        <taxon>Craniata</taxon>
        <taxon>Vertebrata</taxon>
        <taxon>Euteleostomi</taxon>
        <taxon>Mammalia</taxon>
        <taxon>Eutheria</taxon>
        <taxon>Euarchontoglires</taxon>
        <taxon>Glires</taxon>
        <taxon>Rodentia</taxon>
        <taxon>Myomorpha</taxon>
        <taxon>Muroidea</taxon>
        <taxon>Muridae</taxon>
        <taxon>Murinae</taxon>
        <taxon>Mus</taxon>
        <taxon>Mus</taxon>
    </lineage>
</organism>
<reference key="1">
    <citation type="submission" date="2000-06" db="EMBL/GenBank/DDBJ databases">
        <title>Isolation of full-length cDNA clones from mouse brain cDNA library made by oligo-capping method.</title>
        <authorList>
            <person name="Osada N."/>
            <person name="Kusuda J."/>
            <person name="Tanuma R."/>
            <person name="Ito A."/>
            <person name="Hirata M."/>
            <person name="Sugano S."/>
            <person name="Hashimoto K."/>
        </authorList>
    </citation>
    <scope>NUCLEOTIDE SEQUENCE [LARGE SCALE MRNA]</scope>
    <source>
        <strain>C57BL/6J</strain>
        <tissue>Brain</tissue>
    </source>
</reference>
<reference key="2">
    <citation type="journal article" date="2005" name="Science">
        <title>The transcriptional landscape of the mammalian genome.</title>
        <authorList>
            <person name="Carninci P."/>
            <person name="Kasukawa T."/>
            <person name="Katayama S."/>
            <person name="Gough J."/>
            <person name="Frith M.C."/>
            <person name="Maeda N."/>
            <person name="Oyama R."/>
            <person name="Ravasi T."/>
            <person name="Lenhard B."/>
            <person name="Wells C."/>
            <person name="Kodzius R."/>
            <person name="Shimokawa K."/>
            <person name="Bajic V.B."/>
            <person name="Brenner S.E."/>
            <person name="Batalov S."/>
            <person name="Forrest A.R."/>
            <person name="Zavolan M."/>
            <person name="Davis M.J."/>
            <person name="Wilming L.G."/>
            <person name="Aidinis V."/>
            <person name="Allen J.E."/>
            <person name="Ambesi-Impiombato A."/>
            <person name="Apweiler R."/>
            <person name="Aturaliya R.N."/>
            <person name="Bailey T.L."/>
            <person name="Bansal M."/>
            <person name="Baxter L."/>
            <person name="Beisel K.W."/>
            <person name="Bersano T."/>
            <person name="Bono H."/>
            <person name="Chalk A.M."/>
            <person name="Chiu K.P."/>
            <person name="Choudhary V."/>
            <person name="Christoffels A."/>
            <person name="Clutterbuck D.R."/>
            <person name="Crowe M.L."/>
            <person name="Dalla E."/>
            <person name="Dalrymple B.P."/>
            <person name="de Bono B."/>
            <person name="Della Gatta G."/>
            <person name="di Bernardo D."/>
            <person name="Down T."/>
            <person name="Engstrom P."/>
            <person name="Fagiolini M."/>
            <person name="Faulkner G."/>
            <person name="Fletcher C.F."/>
            <person name="Fukushima T."/>
            <person name="Furuno M."/>
            <person name="Futaki S."/>
            <person name="Gariboldi M."/>
            <person name="Georgii-Hemming P."/>
            <person name="Gingeras T.R."/>
            <person name="Gojobori T."/>
            <person name="Green R.E."/>
            <person name="Gustincich S."/>
            <person name="Harbers M."/>
            <person name="Hayashi Y."/>
            <person name="Hensch T.K."/>
            <person name="Hirokawa N."/>
            <person name="Hill D."/>
            <person name="Huminiecki L."/>
            <person name="Iacono M."/>
            <person name="Ikeo K."/>
            <person name="Iwama A."/>
            <person name="Ishikawa T."/>
            <person name="Jakt M."/>
            <person name="Kanapin A."/>
            <person name="Katoh M."/>
            <person name="Kawasawa Y."/>
            <person name="Kelso J."/>
            <person name="Kitamura H."/>
            <person name="Kitano H."/>
            <person name="Kollias G."/>
            <person name="Krishnan S.P."/>
            <person name="Kruger A."/>
            <person name="Kummerfeld S.K."/>
            <person name="Kurochkin I.V."/>
            <person name="Lareau L.F."/>
            <person name="Lazarevic D."/>
            <person name="Lipovich L."/>
            <person name="Liu J."/>
            <person name="Liuni S."/>
            <person name="McWilliam S."/>
            <person name="Madan Babu M."/>
            <person name="Madera M."/>
            <person name="Marchionni L."/>
            <person name="Matsuda H."/>
            <person name="Matsuzawa S."/>
            <person name="Miki H."/>
            <person name="Mignone F."/>
            <person name="Miyake S."/>
            <person name="Morris K."/>
            <person name="Mottagui-Tabar S."/>
            <person name="Mulder N."/>
            <person name="Nakano N."/>
            <person name="Nakauchi H."/>
            <person name="Ng P."/>
            <person name="Nilsson R."/>
            <person name="Nishiguchi S."/>
            <person name="Nishikawa S."/>
            <person name="Nori F."/>
            <person name="Ohara O."/>
            <person name="Okazaki Y."/>
            <person name="Orlando V."/>
            <person name="Pang K.C."/>
            <person name="Pavan W.J."/>
            <person name="Pavesi G."/>
            <person name="Pesole G."/>
            <person name="Petrovsky N."/>
            <person name="Piazza S."/>
            <person name="Reed J."/>
            <person name="Reid J.F."/>
            <person name="Ring B.Z."/>
            <person name="Ringwald M."/>
            <person name="Rost B."/>
            <person name="Ruan Y."/>
            <person name="Salzberg S.L."/>
            <person name="Sandelin A."/>
            <person name="Schneider C."/>
            <person name="Schoenbach C."/>
            <person name="Sekiguchi K."/>
            <person name="Semple C.A."/>
            <person name="Seno S."/>
            <person name="Sessa L."/>
            <person name="Sheng Y."/>
            <person name="Shibata Y."/>
            <person name="Shimada H."/>
            <person name="Shimada K."/>
            <person name="Silva D."/>
            <person name="Sinclair B."/>
            <person name="Sperling S."/>
            <person name="Stupka E."/>
            <person name="Sugiura K."/>
            <person name="Sultana R."/>
            <person name="Takenaka Y."/>
            <person name="Taki K."/>
            <person name="Tammoja K."/>
            <person name="Tan S.L."/>
            <person name="Tang S."/>
            <person name="Taylor M.S."/>
            <person name="Tegner J."/>
            <person name="Teichmann S.A."/>
            <person name="Ueda H.R."/>
            <person name="van Nimwegen E."/>
            <person name="Verardo R."/>
            <person name="Wei C.L."/>
            <person name="Yagi K."/>
            <person name="Yamanishi H."/>
            <person name="Zabarovsky E."/>
            <person name="Zhu S."/>
            <person name="Zimmer A."/>
            <person name="Hide W."/>
            <person name="Bult C."/>
            <person name="Grimmond S.M."/>
            <person name="Teasdale R.D."/>
            <person name="Liu E.T."/>
            <person name="Brusic V."/>
            <person name="Quackenbush J."/>
            <person name="Wahlestedt C."/>
            <person name="Mattick J.S."/>
            <person name="Hume D.A."/>
            <person name="Kai C."/>
            <person name="Sasaki D."/>
            <person name="Tomaru Y."/>
            <person name="Fukuda S."/>
            <person name="Kanamori-Katayama M."/>
            <person name="Suzuki M."/>
            <person name="Aoki J."/>
            <person name="Arakawa T."/>
            <person name="Iida J."/>
            <person name="Imamura K."/>
            <person name="Itoh M."/>
            <person name="Kato T."/>
            <person name="Kawaji H."/>
            <person name="Kawagashira N."/>
            <person name="Kawashima T."/>
            <person name="Kojima M."/>
            <person name="Kondo S."/>
            <person name="Konno H."/>
            <person name="Nakano K."/>
            <person name="Ninomiya N."/>
            <person name="Nishio T."/>
            <person name="Okada M."/>
            <person name="Plessy C."/>
            <person name="Shibata K."/>
            <person name="Shiraki T."/>
            <person name="Suzuki S."/>
            <person name="Tagami M."/>
            <person name="Waki K."/>
            <person name="Watahiki A."/>
            <person name="Okamura-Oho Y."/>
            <person name="Suzuki H."/>
            <person name="Kawai J."/>
            <person name="Hayashizaki Y."/>
        </authorList>
    </citation>
    <scope>NUCLEOTIDE SEQUENCE [LARGE SCALE MRNA]</scope>
    <source>
        <strain>C57BL/6J</strain>
        <tissue>Hippocampus</tissue>
    </source>
</reference>
<reference key="3">
    <citation type="submission" date="2005-07" db="EMBL/GenBank/DDBJ databases">
        <authorList>
            <person name="Mural R.J."/>
            <person name="Adams M.D."/>
            <person name="Myers E.W."/>
            <person name="Smith H.O."/>
            <person name="Venter J.C."/>
        </authorList>
    </citation>
    <scope>NUCLEOTIDE SEQUENCE [LARGE SCALE GENOMIC DNA]</scope>
</reference>
<reference key="4">
    <citation type="journal article" date="2004" name="Genome Res.">
        <title>The status, quality, and expansion of the NIH full-length cDNA project: the Mammalian Gene Collection (MGC).</title>
        <authorList>
            <consortium name="The MGC Project Team"/>
        </authorList>
    </citation>
    <scope>NUCLEOTIDE SEQUENCE [LARGE SCALE MRNA]</scope>
    <source>
        <strain>C57BL/6J</strain>
        <tissue>Brain</tissue>
    </source>
</reference>
<reference key="5">
    <citation type="journal article" date="2010" name="Cell">
        <title>A tissue-specific atlas of mouse protein phosphorylation and expression.</title>
        <authorList>
            <person name="Huttlin E.L."/>
            <person name="Jedrychowski M.P."/>
            <person name="Elias J.E."/>
            <person name="Goswami T."/>
            <person name="Rad R."/>
            <person name="Beausoleil S.A."/>
            <person name="Villen J."/>
            <person name="Haas W."/>
            <person name="Sowa M.E."/>
            <person name="Gygi S.P."/>
        </authorList>
    </citation>
    <scope>IDENTIFICATION BY MASS SPECTROMETRY [LARGE SCALE ANALYSIS]</scope>
    <source>
        <tissue>Brain</tissue>
        <tissue>Lung</tissue>
        <tissue>Pancreas</tissue>
        <tissue>Spleen</tissue>
        <tissue>Testis</tissue>
    </source>
</reference>
<comment type="function">
    <text evidence="1">Required for normal Golgi function.</text>
</comment>
<comment type="subunit">
    <text evidence="1">Component of the conserved oligomeric Golgi complex which is composed of eight different subunits and is required for normal Golgi morphology and localization.</text>
</comment>
<comment type="subcellular location">
    <subcellularLocation>
        <location evidence="1">Golgi apparatus membrane</location>
        <topology evidence="1">Peripheral membrane protein</topology>
    </subcellularLocation>
</comment>
<comment type="similarity">
    <text evidence="3">Belongs to the COG8 family.</text>
</comment>
<keyword id="KW-0333">Golgi apparatus</keyword>
<keyword id="KW-0472">Membrane</keyword>
<keyword id="KW-0653">Protein transport</keyword>
<keyword id="KW-1185">Reference proteome</keyword>
<keyword id="KW-0813">Transport</keyword>
<gene>
    <name type="primary">Cog8</name>
    <name type="ORF">MNCb-5704</name>
</gene>
<accession>Q9JJA2</accession>
<accession>Q8BFW5</accession>
<dbReference type="EMBL" id="AB041610">
    <property type="protein sequence ID" value="BAA95093.2"/>
    <property type="molecule type" value="mRNA"/>
</dbReference>
<dbReference type="EMBL" id="AK049240">
    <property type="protein sequence ID" value="BAC33630.1"/>
    <property type="molecule type" value="mRNA"/>
</dbReference>
<dbReference type="EMBL" id="AK049957">
    <property type="protein sequence ID" value="BAC34007.1"/>
    <property type="molecule type" value="mRNA"/>
</dbReference>
<dbReference type="EMBL" id="AK083734">
    <property type="protein sequence ID" value="BAC39008.1"/>
    <property type="molecule type" value="mRNA"/>
</dbReference>
<dbReference type="EMBL" id="AK145515">
    <property type="protein sequence ID" value="BAE26480.1"/>
    <property type="molecule type" value="mRNA"/>
</dbReference>
<dbReference type="EMBL" id="AK159569">
    <property type="protein sequence ID" value="BAE35191.1"/>
    <property type="molecule type" value="mRNA"/>
</dbReference>
<dbReference type="EMBL" id="CH466525">
    <property type="protein sequence ID" value="EDL11392.1"/>
    <property type="molecule type" value="Genomic_DNA"/>
</dbReference>
<dbReference type="EMBL" id="CH466525">
    <property type="protein sequence ID" value="EDL11393.1"/>
    <property type="molecule type" value="Genomic_DNA"/>
</dbReference>
<dbReference type="EMBL" id="BC094654">
    <property type="protein sequence ID" value="AAH94654.1"/>
    <property type="molecule type" value="mRNA"/>
</dbReference>
<dbReference type="CCDS" id="CCDS22643.1"/>
<dbReference type="RefSeq" id="NP_631975.3">
    <property type="nucleotide sequence ID" value="NM_139229.4"/>
</dbReference>
<dbReference type="SMR" id="Q9JJA2"/>
<dbReference type="FunCoup" id="Q9JJA2">
    <property type="interactions" value="3164"/>
</dbReference>
<dbReference type="IntAct" id="Q9JJA2">
    <property type="interactions" value="1"/>
</dbReference>
<dbReference type="STRING" id="10090.ENSMUSP00000093173"/>
<dbReference type="iPTMnet" id="Q9JJA2"/>
<dbReference type="PhosphoSitePlus" id="Q9JJA2"/>
<dbReference type="PaxDb" id="10090-ENSMUSP00000093173"/>
<dbReference type="ProteomicsDB" id="283344"/>
<dbReference type="Pumba" id="Q9JJA2"/>
<dbReference type="Ensembl" id="ENSMUST00000034391.4">
    <property type="protein sequence ID" value="ENSMUSP00000034391.4"/>
    <property type="gene ID" value="ENSMUSG00000031916.18"/>
</dbReference>
<dbReference type="Ensembl" id="ENSMUST00000095517.12">
    <property type="protein sequence ID" value="ENSMUSP00000093173.6"/>
    <property type="gene ID" value="ENSMUSG00000031916.18"/>
</dbReference>
<dbReference type="GeneID" id="97484"/>
<dbReference type="KEGG" id="mmu:97484"/>
<dbReference type="UCSC" id="uc009ngy.2">
    <property type="organism name" value="mouse"/>
</dbReference>
<dbReference type="AGR" id="MGI:2142885"/>
<dbReference type="CTD" id="84342"/>
<dbReference type="MGI" id="MGI:2142885">
    <property type="gene designation" value="Cog8"/>
</dbReference>
<dbReference type="VEuPathDB" id="HostDB:ENSMUSG00000031916"/>
<dbReference type="eggNOG" id="KOG2069">
    <property type="taxonomic scope" value="Eukaryota"/>
</dbReference>
<dbReference type="GeneTree" id="ENSGT00390000015893"/>
<dbReference type="HOGENOM" id="CLU_017968_0_0_1"/>
<dbReference type="InParanoid" id="Q9JJA2"/>
<dbReference type="OMA" id="QRCIHGV"/>
<dbReference type="OrthoDB" id="1661054at2759"/>
<dbReference type="PhylomeDB" id="Q9JJA2"/>
<dbReference type="TreeFam" id="TF315000"/>
<dbReference type="Reactome" id="R-MMU-6807878">
    <property type="pathway name" value="COPI-mediated anterograde transport"/>
</dbReference>
<dbReference type="Reactome" id="R-MMU-6811438">
    <property type="pathway name" value="Intra-Golgi traffic"/>
</dbReference>
<dbReference type="Reactome" id="R-MMU-6811440">
    <property type="pathway name" value="Retrograde transport at the Trans-Golgi-Network"/>
</dbReference>
<dbReference type="BioGRID-ORCS" id="97484">
    <property type="hits" value="11 hits in 78 CRISPR screens"/>
</dbReference>
<dbReference type="ChiTaRS" id="Cog8">
    <property type="organism name" value="mouse"/>
</dbReference>
<dbReference type="PRO" id="PR:Q9JJA2"/>
<dbReference type="Proteomes" id="UP000000589">
    <property type="component" value="Chromosome 8"/>
</dbReference>
<dbReference type="RNAct" id="Q9JJA2">
    <property type="molecule type" value="protein"/>
</dbReference>
<dbReference type="Bgee" id="ENSMUSG00000031916">
    <property type="expression patterns" value="Expressed in ear vesicle and 214 other cell types or tissues"/>
</dbReference>
<dbReference type="ExpressionAtlas" id="Q9JJA2">
    <property type="expression patterns" value="baseline and differential"/>
</dbReference>
<dbReference type="GO" id="GO:0000139">
    <property type="term" value="C:Golgi membrane"/>
    <property type="evidence" value="ECO:0007669"/>
    <property type="project" value="UniProtKB-SubCell"/>
</dbReference>
<dbReference type="GO" id="GO:0017119">
    <property type="term" value="C:Golgi transport complex"/>
    <property type="evidence" value="ECO:0007669"/>
    <property type="project" value="Ensembl"/>
</dbReference>
<dbReference type="GO" id="GO:0070085">
    <property type="term" value="P:glycosylation"/>
    <property type="evidence" value="ECO:0007669"/>
    <property type="project" value="Ensembl"/>
</dbReference>
<dbReference type="GO" id="GO:0007030">
    <property type="term" value="P:Golgi organization"/>
    <property type="evidence" value="ECO:0007669"/>
    <property type="project" value="Ensembl"/>
</dbReference>
<dbReference type="GO" id="GO:0015031">
    <property type="term" value="P:protein transport"/>
    <property type="evidence" value="ECO:0007669"/>
    <property type="project" value="UniProtKB-KW"/>
</dbReference>
<dbReference type="GO" id="GO:0000301">
    <property type="term" value="P:retrograde transport, vesicle recycling within Golgi"/>
    <property type="evidence" value="ECO:0007669"/>
    <property type="project" value="Ensembl"/>
</dbReference>
<dbReference type="InterPro" id="IPR007255">
    <property type="entry name" value="COG8"/>
</dbReference>
<dbReference type="InterPro" id="IPR016632">
    <property type="entry name" value="COG8_Metazoal_Plant"/>
</dbReference>
<dbReference type="InterPro" id="IPR016159">
    <property type="entry name" value="Cullin_repeat-like_dom_sf"/>
</dbReference>
<dbReference type="PANTHER" id="PTHR21311">
    <property type="entry name" value="CONSERVED OLIGOMERIC GOLGI COMPLEX COMPONENT 8"/>
    <property type="match status" value="1"/>
</dbReference>
<dbReference type="PANTHER" id="PTHR21311:SF0">
    <property type="entry name" value="CONSERVED OLIGOMERIC GOLGI COMPLEX SUBUNIT 8"/>
    <property type="match status" value="1"/>
</dbReference>
<dbReference type="Pfam" id="PF04124">
    <property type="entry name" value="Dor1"/>
    <property type="match status" value="1"/>
</dbReference>
<dbReference type="PIRSF" id="PIRSF015415">
    <property type="entry name" value="COG8"/>
    <property type="match status" value="1"/>
</dbReference>
<dbReference type="SUPFAM" id="SSF74788">
    <property type="entry name" value="Cullin repeat-like"/>
    <property type="match status" value="1"/>
</dbReference>
<proteinExistence type="evidence at protein level"/>
<feature type="chain" id="PRO_0000213522" description="Conserved oligomeric Golgi complex subunit 8">
    <location>
        <begin position="1"/>
        <end position="640"/>
    </location>
</feature>
<feature type="region of interest" description="Disordered" evidence="2">
    <location>
        <begin position="580"/>
        <end position="640"/>
    </location>
</feature>
<feature type="sequence conflict" description="In Ref. 1; BAA95093." evidence="3" ref="1">
    <original>G</original>
    <variation>S</variation>
    <location>
        <position position="413"/>
    </location>
</feature>
<feature type="sequence conflict" description="In Ref. 1; BAA95093." evidence="3" ref="1">
    <original>A</original>
    <variation>G</variation>
    <location>
        <position position="627"/>
    </location>
</feature>
<evidence type="ECO:0000250" key="1"/>
<evidence type="ECO:0000256" key="2">
    <source>
        <dbReference type="SAM" id="MobiDB-lite"/>
    </source>
</evidence>
<evidence type="ECO:0000305" key="3"/>
<protein>
    <recommendedName>
        <fullName>Conserved oligomeric Golgi complex subunit 8</fullName>
        <shortName>COG complex subunit 8</shortName>
    </recommendedName>
    <alternativeName>
        <fullName>Component of oligomeric Golgi complex 8</fullName>
    </alternativeName>
</protein>
<sequence length="640" mass="71602">MAAALPLQPSTTASATTTATAVALGEVEDEGLLASLFRDRFPEAQWREKPDVGRYLRELSGSGLDRLRREPERLAEERAQRLQQTRDLAFANYKTFIRGAECTERIHRLFGDVEASLGRLLDRLPRFQQSCRNFVKEAEEISSSRRMNTLTLNRHTEILEILEIPQLMDTCVRNSYHEEALELAAYVRRLERKYSSIPVIQGIVNEVRQSMQLMLSQLIQQLRTNIQLPACLRVIGYLRRMDVFTEAELRVKFLQARDAWLRSILTAIPNDDPYFHITKTIEACRVHLFDIITQYRAIFSDEDPLLPPAMGEYTVNEGAIFHGWVLQKISQFLQVLETDLYRGIGGRLDSLLGQCMYFGLSFSRVGADFRGQLAPVFQRVAISTFQKAVEEAVEKFQDEMTSYTLISTAAILGSSNTPATVPATQPGTLQPPMVLLDFPPLACFLNNILVAFNDLRLCCPVALAQDVTGTLENALTKVTKTILAFHRAEEAVFSSGEHEIFVQFCTAFLEDLVPYLNRCLQVLFPPAQIAQTLGISPTQLSKHGNLGHVNISAIQEPLAFILPKRETVFCLDEQELGPDLVAPAPELPAEQRSMEPVTEKREPGEPLPQEPMEGEPLPAEPPSEGGAIGSVPCPQPGEQP</sequence>
<name>COG8_MOUSE</name>